<comment type="function">
    <text evidence="1">Part of a complex that plays a role in tracheal liquid clearance. Probable role in sodium transport (By similarity).</text>
</comment>
<comment type="subcellular location">
    <subcellularLocation>
        <location>Membrane</location>
        <topology>Multi-pass membrane protein</topology>
    </subcellularLocation>
</comment>
<comment type="similarity">
    <text evidence="3">Belongs to the amiloride-sensitive sodium channel (TC 1.A.6) family.</text>
</comment>
<keyword id="KW-0325">Glycoprotein</keyword>
<keyword id="KW-0407">Ion channel</keyword>
<keyword id="KW-0406">Ion transport</keyword>
<keyword id="KW-0472">Membrane</keyword>
<keyword id="KW-0915">Sodium</keyword>
<keyword id="KW-0894">Sodium channel</keyword>
<keyword id="KW-0739">Sodium transport</keyword>
<keyword id="KW-0812">Transmembrane</keyword>
<keyword id="KW-1133">Transmembrane helix</keyword>
<keyword id="KW-0813">Transport</keyword>
<feature type="chain" id="PRO_0000181311" description="Sodium channel protein Nach">
    <location>
        <begin position="1" status="less than"/>
        <end position="384"/>
    </location>
</feature>
<feature type="topological domain" description="Extracellular" evidence="2">
    <location>
        <begin position="1" status="less than"/>
        <end position="319"/>
    </location>
</feature>
<feature type="transmembrane region" description="Helical" evidence="2">
    <location>
        <begin position="320"/>
        <end position="340"/>
    </location>
</feature>
<feature type="topological domain" description="Cytoplasmic" evidence="2">
    <location>
        <begin position="341"/>
        <end position="384"/>
    </location>
</feature>
<feature type="glycosylation site" description="N-linked (GlcNAc...) asparagine" evidence="2">
    <location>
        <position position="32"/>
    </location>
</feature>
<feature type="glycosylation site" description="N-linked (GlcNAc...) asparagine" evidence="2">
    <location>
        <position position="215"/>
    </location>
</feature>
<feature type="non-terminal residue" evidence="4">
    <location>
        <position position="1"/>
    </location>
</feature>
<sequence>AAFAYFSGFMLDDARFSPAEIELMESVLLDNNLTMVQFVDRLRWDCHELLHRCRYHGDIMDCTQLFQLSKTFFGHCCSFNLRQHGLDFTAQAAAGGLDNGLSLILRYKDENYDALQSYSHGFKLLIQETDAFPSAHADCKFLGLNTESFATLRVVETFCSEAVKSLPISQRNCVFRHEFRLRYFSDYVYPNCELNCRAKNMVKLCGCHTYFFEFNRTKDRVCTFRDIPCLVDNFPDIITRRKKTQCNCPLTCEHFDYDVQMSNFALMLNMPVVDPFYTGIERNDAIVHIFLNSQVYRRVRVDLLSNMVTLVSHLGSAFSLFVGMSMLSLVEIIYYFTVILRRNYVQECRARQKLQTLHRRPNFGWPGDKNSNQQKSVFYIRGRN</sequence>
<name>NACH_DROVI</name>
<accession>Q9NJP2</accession>
<dbReference type="EMBL" id="AF136603">
    <property type="protein sequence ID" value="AAF61426.1"/>
    <property type="molecule type" value="Genomic_DNA"/>
</dbReference>
<dbReference type="SMR" id="Q9NJP2"/>
<dbReference type="GlyCosmos" id="Q9NJP2">
    <property type="glycosylation" value="2 sites, No reported glycans"/>
</dbReference>
<dbReference type="eggNOG" id="KOG4294">
    <property type="taxonomic scope" value="Eukaryota"/>
</dbReference>
<dbReference type="OrthoDB" id="6502088at2759"/>
<dbReference type="GO" id="GO:0005886">
    <property type="term" value="C:plasma membrane"/>
    <property type="evidence" value="ECO:0007669"/>
    <property type="project" value="TreeGrafter"/>
</dbReference>
<dbReference type="GO" id="GO:0015280">
    <property type="term" value="F:ligand-gated sodium channel activity"/>
    <property type="evidence" value="ECO:0007669"/>
    <property type="project" value="TreeGrafter"/>
</dbReference>
<dbReference type="GO" id="GO:0035002">
    <property type="term" value="P:liquid clearance, open tracheal system"/>
    <property type="evidence" value="ECO:0000250"/>
    <property type="project" value="UniProtKB"/>
</dbReference>
<dbReference type="FunFam" id="2.60.470.10:FF:000021">
    <property type="entry name" value="Sodium channel protein Nach"/>
    <property type="match status" value="1"/>
</dbReference>
<dbReference type="Gene3D" id="2.60.470.10">
    <property type="entry name" value="Acid-sensing ion channels like domains"/>
    <property type="match status" value="1"/>
</dbReference>
<dbReference type="Gene3D" id="1.10.287.770">
    <property type="entry name" value="YojJ-like"/>
    <property type="match status" value="1"/>
</dbReference>
<dbReference type="InterPro" id="IPR001873">
    <property type="entry name" value="ENaC"/>
</dbReference>
<dbReference type="InterPro" id="IPR020903">
    <property type="entry name" value="ENaC_CS"/>
</dbReference>
<dbReference type="PANTHER" id="PTHR11690">
    <property type="entry name" value="AMILORIDE-SENSITIVE SODIUM CHANNEL-RELATED"/>
    <property type="match status" value="1"/>
</dbReference>
<dbReference type="PANTHER" id="PTHR11690:SF237">
    <property type="entry name" value="PICKPOCKET 16-RELATED"/>
    <property type="match status" value="1"/>
</dbReference>
<dbReference type="Pfam" id="PF00858">
    <property type="entry name" value="ASC"/>
    <property type="match status" value="1"/>
</dbReference>
<dbReference type="PRINTS" id="PR01078">
    <property type="entry name" value="AMINACHANNEL"/>
</dbReference>
<dbReference type="PROSITE" id="PS01206">
    <property type="entry name" value="ASC"/>
    <property type="match status" value="1"/>
</dbReference>
<evidence type="ECO:0000250" key="1">
    <source>
        <dbReference type="UniProtKB" id="O61365"/>
    </source>
</evidence>
<evidence type="ECO:0000255" key="2"/>
<evidence type="ECO:0000305" key="3"/>
<evidence type="ECO:0000312" key="4">
    <source>
        <dbReference type="EMBL" id="AAF61426.1"/>
    </source>
</evidence>
<protein>
    <recommendedName>
        <fullName>Sodium channel protein Nach</fullName>
    </recommendedName>
</protein>
<proteinExistence type="inferred from homology"/>
<gene>
    <name type="primary">Nach</name>
</gene>
<organism evidence="4">
    <name type="scientific">Drosophila virilis</name>
    <name type="common">Fruit fly</name>
    <dbReference type="NCBI Taxonomy" id="7244"/>
    <lineage>
        <taxon>Eukaryota</taxon>
        <taxon>Metazoa</taxon>
        <taxon>Ecdysozoa</taxon>
        <taxon>Arthropoda</taxon>
        <taxon>Hexapoda</taxon>
        <taxon>Insecta</taxon>
        <taxon>Pterygota</taxon>
        <taxon>Neoptera</taxon>
        <taxon>Endopterygota</taxon>
        <taxon>Diptera</taxon>
        <taxon>Brachycera</taxon>
        <taxon>Muscomorpha</taxon>
        <taxon>Ephydroidea</taxon>
        <taxon>Drosophilidae</taxon>
        <taxon>Drosophila</taxon>
    </lineage>
</organism>
<reference evidence="4" key="1">
    <citation type="submission" date="1999-03" db="EMBL/GenBank/DDBJ databases">
        <title>Origin and evolution of the Amyrel gene in Drosophila.</title>
        <authorList>
            <person name="Da Lage J.-L."/>
            <person name="Renard E."/>
            <person name="Chartois F."/>
            <person name="Cariou M.-L."/>
        </authorList>
    </citation>
    <scope>NUCLEOTIDE SEQUENCE [GENOMIC DNA]</scope>
</reference>